<accession>Q9FFB0</accession>
<protein>
    <recommendedName>
        <fullName>Serine carboxypeptidase-like 47</fullName>
        <ecNumber>3.4.16.-</ecNumber>
    </recommendedName>
</protein>
<sequence>MEAKTFFLFMLFIFSQSWLSTSKRILNNPSVFSSSLNFSSGNAERLIKSFNLMPKYDVNVIPKGSLDAPRLIERQIDFLATAGSKNASVGPSVQEFGHYAGYYSLPHSKSAKMFYFFFESRNKTTDPVVIWLTGGPGCSSSVAMFYENGPFKISKDLSLYWNDFGWDKVSNIIYVDQPVGTGFSYTSDESDIRNDEDGVSNDLYDFLQAFFKEHPKFVKNDFFITGESYAGHYIPALASRVHSGNKKKEGIPINLKGFAIGNGLTNPEIQYGAYGDYALQMKLISESDHESLKQDYVECQNITKKCSLGGGLVCDSAVEVCTSIFNKIVAKKSGLNYYDIRKKCVGSLCYDFSRMEIFLNKENVRKALGVGDIKFVSCSSTVYDAMIEDWMQNLEVKIPSLVNDGINLLVYAGEYDLICNWLGNSRWVDQMNWSGQKGFGSAKNVSFLVDGKEAGLLKNHGPLTFLKVYNAGHMVPMDQPKASLQMLQNWMQGKLRTTPVLGFSQ</sequence>
<comment type="function">
    <text evidence="1">Probable carboxypeptidase.</text>
</comment>
<comment type="subcellular location">
    <subcellularLocation>
        <location evidence="4">Secreted</location>
    </subcellularLocation>
</comment>
<comment type="tissue specificity">
    <text evidence="3">Expressed in roots, flowers and siliques.</text>
</comment>
<comment type="similarity">
    <text evidence="4">Belongs to the peptidase S10 family.</text>
</comment>
<name>SCP47_ARATH</name>
<feature type="signal peptide" evidence="2">
    <location>
        <begin position="1"/>
        <end position="22"/>
    </location>
</feature>
<feature type="chain" id="PRO_0000274662" description="Serine carboxypeptidase-like 47">
    <location>
        <begin position="23"/>
        <end position="505"/>
    </location>
</feature>
<feature type="active site" evidence="1">
    <location>
        <position position="228"/>
    </location>
</feature>
<feature type="active site" evidence="1">
    <location>
        <position position="416"/>
    </location>
</feature>
<feature type="active site" evidence="1">
    <location>
        <position position="473"/>
    </location>
</feature>
<feature type="glycosylation site" description="N-linked (GlcNAc...) asparagine" evidence="2">
    <location>
        <position position="37"/>
    </location>
</feature>
<feature type="glycosylation site" description="N-linked (GlcNAc...) asparagine" evidence="2">
    <location>
        <position position="86"/>
    </location>
</feature>
<feature type="glycosylation site" description="N-linked (GlcNAc...) asparagine" evidence="2">
    <location>
        <position position="122"/>
    </location>
</feature>
<feature type="glycosylation site" description="N-linked (GlcNAc...) asparagine" evidence="2">
    <location>
        <position position="301"/>
    </location>
</feature>
<feature type="glycosylation site" description="N-linked (GlcNAc...) asparagine" evidence="2">
    <location>
        <position position="432"/>
    </location>
</feature>
<feature type="glycosylation site" description="N-linked (GlcNAc...) asparagine" evidence="2">
    <location>
        <position position="444"/>
    </location>
</feature>
<feature type="disulfide bond" evidence="1">
    <location>
        <begin position="138"/>
        <end position="378"/>
    </location>
</feature>
<feature type="disulfide bond" evidence="1">
    <location>
        <begin position="306"/>
        <end position="321"/>
    </location>
</feature>
<feature type="disulfide bond" evidence="1">
    <location>
        <begin position="344"/>
        <end position="349"/>
    </location>
</feature>
<gene>
    <name type="primary">SCPL47</name>
    <name type="ordered locus">At5g22980</name>
    <name type="ORF">MRN17.21</name>
</gene>
<proteinExistence type="evidence at transcript level"/>
<reference key="1">
    <citation type="journal article" date="1997" name="DNA Res.">
        <title>Structural analysis of Arabidopsis thaliana chromosome 5. I. Sequence features of the 1.6 Mb regions covered by twenty physically assigned P1 clones.</title>
        <authorList>
            <person name="Sato S."/>
            <person name="Kotani H."/>
            <person name="Nakamura Y."/>
            <person name="Kaneko T."/>
            <person name="Asamizu E."/>
            <person name="Fukami M."/>
            <person name="Miyajima N."/>
            <person name="Tabata S."/>
        </authorList>
    </citation>
    <scope>NUCLEOTIDE SEQUENCE [LARGE SCALE GENOMIC DNA]</scope>
    <source>
        <strain>cv. Columbia</strain>
    </source>
</reference>
<reference key="2">
    <citation type="journal article" date="2017" name="Plant J.">
        <title>Araport11: a complete reannotation of the Arabidopsis thaliana reference genome.</title>
        <authorList>
            <person name="Cheng C.Y."/>
            <person name="Krishnakumar V."/>
            <person name="Chan A.P."/>
            <person name="Thibaud-Nissen F."/>
            <person name="Schobel S."/>
            <person name="Town C.D."/>
        </authorList>
    </citation>
    <scope>GENOME REANNOTATION</scope>
    <source>
        <strain>cv. Columbia</strain>
    </source>
</reference>
<reference key="3">
    <citation type="journal article" date="2005" name="Plant Physiol.">
        <title>An expression and bioinformatics analysis of the Arabidopsis serine carboxypeptidase-like gene family.</title>
        <authorList>
            <person name="Fraser C.M."/>
            <person name="Rider L.W."/>
            <person name="Chapple C."/>
        </authorList>
    </citation>
    <scope>GENE FAMILY</scope>
    <scope>TISSUE SPECIFICITY</scope>
    <scope>NOMENCLATURE</scope>
</reference>
<keyword id="KW-0121">Carboxypeptidase</keyword>
<keyword id="KW-1015">Disulfide bond</keyword>
<keyword id="KW-0325">Glycoprotein</keyword>
<keyword id="KW-0378">Hydrolase</keyword>
<keyword id="KW-0645">Protease</keyword>
<keyword id="KW-1185">Reference proteome</keyword>
<keyword id="KW-0964">Secreted</keyword>
<keyword id="KW-0732">Signal</keyword>
<dbReference type="EC" id="3.4.16.-"/>
<dbReference type="EMBL" id="AB005243">
    <property type="protein sequence ID" value="BAB10619.1"/>
    <property type="molecule type" value="Genomic_DNA"/>
</dbReference>
<dbReference type="EMBL" id="CP002688">
    <property type="protein sequence ID" value="AED93104.1"/>
    <property type="molecule type" value="Genomic_DNA"/>
</dbReference>
<dbReference type="RefSeq" id="NP_197689.1">
    <property type="nucleotide sequence ID" value="NM_122204.3"/>
</dbReference>
<dbReference type="SMR" id="Q9FFB0"/>
<dbReference type="FunCoup" id="Q9FFB0">
    <property type="interactions" value="523"/>
</dbReference>
<dbReference type="ESTHER" id="arath-SCP47">
    <property type="family name" value="Carboxypeptidase_S10"/>
</dbReference>
<dbReference type="MEROPS" id="S10.A44"/>
<dbReference type="GlyCosmos" id="Q9FFB0">
    <property type="glycosylation" value="6 sites, No reported glycans"/>
</dbReference>
<dbReference type="GlyGen" id="Q9FFB0">
    <property type="glycosylation" value="6 sites"/>
</dbReference>
<dbReference type="iPTMnet" id="Q9FFB0"/>
<dbReference type="PaxDb" id="3702-AT5G22980.1"/>
<dbReference type="ProteomicsDB" id="226611"/>
<dbReference type="EnsemblPlants" id="AT5G22980.1">
    <property type="protein sequence ID" value="AT5G22980.1"/>
    <property type="gene ID" value="AT5G22980"/>
</dbReference>
<dbReference type="GeneID" id="832362"/>
<dbReference type="Gramene" id="AT5G22980.1">
    <property type="protein sequence ID" value="AT5G22980.1"/>
    <property type="gene ID" value="AT5G22980"/>
</dbReference>
<dbReference type="KEGG" id="ath:AT5G22980"/>
<dbReference type="Araport" id="AT5G22980"/>
<dbReference type="TAIR" id="AT5G22980">
    <property type="gene designation" value="SCPL47"/>
</dbReference>
<dbReference type="eggNOG" id="KOG1282">
    <property type="taxonomic scope" value="Eukaryota"/>
</dbReference>
<dbReference type="HOGENOM" id="CLU_008523_10_1_1"/>
<dbReference type="InParanoid" id="Q9FFB0"/>
<dbReference type="OMA" id="KQDYVEC"/>
<dbReference type="PhylomeDB" id="Q9FFB0"/>
<dbReference type="PRO" id="PR:Q9FFB0"/>
<dbReference type="Proteomes" id="UP000006548">
    <property type="component" value="Chromosome 5"/>
</dbReference>
<dbReference type="ExpressionAtlas" id="Q9FFB0">
    <property type="expression patterns" value="baseline and differential"/>
</dbReference>
<dbReference type="GO" id="GO:0005576">
    <property type="term" value="C:extracellular region"/>
    <property type="evidence" value="ECO:0007669"/>
    <property type="project" value="UniProtKB-SubCell"/>
</dbReference>
<dbReference type="GO" id="GO:0004185">
    <property type="term" value="F:serine-type carboxypeptidase activity"/>
    <property type="evidence" value="ECO:0007669"/>
    <property type="project" value="InterPro"/>
</dbReference>
<dbReference type="GO" id="GO:0006508">
    <property type="term" value="P:proteolysis"/>
    <property type="evidence" value="ECO:0007669"/>
    <property type="project" value="UniProtKB-KW"/>
</dbReference>
<dbReference type="FunFam" id="3.40.50.1820:FF:000060">
    <property type="entry name" value="Carboxypeptidase"/>
    <property type="match status" value="1"/>
</dbReference>
<dbReference type="Gene3D" id="3.40.50.1820">
    <property type="entry name" value="alpha/beta hydrolase"/>
    <property type="match status" value="1"/>
</dbReference>
<dbReference type="InterPro" id="IPR029058">
    <property type="entry name" value="AB_hydrolase_fold"/>
</dbReference>
<dbReference type="InterPro" id="IPR001563">
    <property type="entry name" value="Peptidase_S10"/>
</dbReference>
<dbReference type="InterPro" id="IPR033124">
    <property type="entry name" value="Ser_caboxypep_his_AS"/>
</dbReference>
<dbReference type="InterPro" id="IPR018202">
    <property type="entry name" value="Ser_caboxypep_ser_AS"/>
</dbReference>
<dbReference type="PANTHER" id="PTHR11802:SF307">
    <property type="entry name" value="SERINE CARBOXYPEPTIDASE-LIKE 47"/>
    <property type="match status" value="1"/>
</dbReference>
<dbReference type="PANTHER" id="PTHR11802">
    <property type="entry name" value="SERINE PROTEASE FAMILY S10 SERINE CARBOXYPEPTIDASE"/>
    <property type="match status" value="1"/>
</dbReference>
<dbReference type="Pfam" id="PF00450">
    <property type="entry name" value="Peptidase_S10"/>
    <property type="match status" value="1"/>
</dbReference>
<dbReference type="PRINTS" id="PR00724">
    <property type="entry name" value="CRBOXYPTASEC"/>
</dbReference>
<dbReference type="SUPFAM" id="SSF53474">
    <property type="entry name" value="alpha/beta-Hydrolases"/>
    <property type="match status" value="1"/>
</dbReference>
<dbReference type="PROSITE" id="PS00560">
    <property type="entry name" value="CARBOXYPEPT_SER_HIS"/>
    <property type="match status" value="1"/>
</dbReference>
<dbReference type="PROSITE" id="PS00131">
    <property type="entry name" value="CARBOXYPEPT_SER_SER"/>
    <property type="match status" value="1"/>
</dbReference>
<organism>
    <name type="scientific">Arabidopsis thaliana</name>
    <name type="common">Mouse-ear cress</name>
    <dbReference type="NCBI Taxonomy" id="3702"/>
    <lineage>
        <taxon>Eukaryota</taxon>
        <taxon>Viridiplantae</taxon>
        <taxon>Streptophyta</taxon>
        <taxon>Embryophyta</taxon>
        <taxon>Tracheophyta</taxon>
        <taxon>Spermatophyta</taxon>
        <taxon>Magnoliopsida</taxon>
        <taxon>eudicotyledons</taxon>
        <taxon>Gunneridae</taxon>
        <taxon>Pentapetalae</taxon>
        <taxon>rosids</taxon>
        <taxon>malvids</taxon>
        <taxon>Brassicales</taxon>
        <taxon>Brassicaceae</taxon>
        <taxon>Camelineae</taxon>
        <taxon>Arabidopsis</taxon>
    </lineage>
</organism>
<evidence type="ECO:0000250" key="1"/>
<evidence type="ECO:0000255" key="2"/>
<evidence type="ECO:0000269" key="3">
    <source>
    </source>
</evidence>
<evidence type="ECO:0000305" key="4"/>